<protein>
    <recommendedName>
        <fullName evidence="1">Asparagine--tRNA ligase</fullName>
        <ecNumber evidence="1">6.1.1.22</ecNumber>
    </recommendedName>
    <alternativeName>
        <fullName evidence="1">Asparaginyl-tRNA synthetase</fullName>
        <shortName evidence="1">AsnRS</shortName>
    </alternativeName>
</protein>
<sequence>MSVVPVADVLQGRVAVDQEVTVRGWVRTRRDSKAGISFLAVYDGSCFDPVQAVINNSLPNYNDDVLHLTTGCSVIVTGVVVASPGQGQSFELQATAIEVTGWVEDPDTYPMAAKRHSIEYLREVAHLRPRTNMIGAVARVRHTLAQALHRFFDEQGYFWVSTPLITASDTEGAGEMFRVSTLDLENLPRTPEGKVDFDKDFFGKEAFLTVSGQLNGETYACALSKIYTFGPTFRAENSNTSRHLAEFWMLEPEVAFANLNDVAGLAEAMLKYVFKAVLEERADDMKFFAERVDSDAVARLERFVSADFAQVDYTDAVAILEKCGEKFENPVYWGVDLSSEHERYLAEKHFKAPVVVKNYPKDIKAFYMRLNEDGKTVAAMDVLAPGIGEIIGGSQREERLDVLDARMEEMGLNPADYSWYRDLRRYGTVPHSGFGLGFERLIAYVTGVQNVRDVIAFPRTPRNASF</sequence>
<gene>
    <name evidence="1" type="primary">asnS</name>
    <name type="ordered locus">Ent638_1449</name>
</gene>
<name>SYN_ENT38</name>
<organism>
    <name type="scientific">Enterobacter sp. (strain 638)</name>
    <dbReference type="NCBI Taxonomy" id="399742"/>
    <lineage>
        <taxon>Bacteria</taxon>
        <taxon>Pseudomonadati</taxon>
        <taxon>Pseudomonadota</taxon>
        <taxon>Gammaproteobacteria</taxon>
        <taxon>Enterobacterales</taxon>
        <taxon>Enterobacteriaceae</taxon>
        <taxon>Enterobacter</taxon>
    </lineage>
</organism>
<accession>A4W8U9</accession>
<feature type="chain" id="PRO_1000061020" description="Asparagine--tRNA ligase">
    <location>
        <begin position="1"/>
        <end position="466"/>
    </location>
</feature>
<proteinExistence type="inferred from homology"/>
<keyword id="KW-0030">Aminoacyl-tRNA synthetase</keyword>
<keyword id="KW-0067">ATP-binding</keyword>
<keyword id="KW-0963">Cytoplasm</keyword>
<keyword id="KW-0436">Ligase</keyword>
<keyword id="KW-0547">Nucleotide-binding</keyword>
<keyword id="KW-0648">Protein biosynthesis</keyword>
<dbReference type="EC" id="6.1.1.22" evidence="1"/>
<dbReference type="EMBL" id="CP000653">
    <property type="protein sequence ID" value="ABP60129.1"/>
    <property type="molecule type" value="Genomic_DNA"/>
</dbReference>
<dbReference type="RefSeq" id="WP_012016846.1">
    <property type="nucleotide sequence ID" value="NC_009436.1"/>
</dbReference>
<dbReference type="SMR" id="A4W8U9"/>
<dbReference type="STRING" id="399742.Ent638_1449"/>
<dbReference type="KEGG" id="ent:Ent638_1449"/>
<dbReference type="eggNOG" id="COG0017">
    <property type="taxonomic scope" value="Bacteria"/>
</dbReference>
<dbReference type="HOGENOM" id="CLU_004553_2_0_6"/>
<dbReference type="OrthoDB" id="9762036at2"/>
<dbReference type="Proteomes" id="UP000000230">
    <property type="component" value="Chromosome"/>
</dbReference>
<dbReference type="GO" id="GO:0005737">
    <property type="term" value="C:cytoplasm"/>
    <property type="evidence" value="ECO:0007669"/>
    <property type="project" value="UniProtKB-SubCell"/>
</dbReference>
<dbReference type="GO" id="GO:0004816">
    <property type="term" value="F:asparagine-tRNA ligase activity"/>
    <property type="evidence" value="ECO:0007669"/>
    <property type="project" value="UniProtKB-UniRule"/>
</dbReference>
<dbReference type="GO" id="GO:0005524">
    <property type="term" value="F:ATP binding"/>
    <property type="evidence" value="ECO:0007669"/>
    <property type="project" value="UniProtKB-UniRule"/>
</dbReference>
<dbReference type="GO" id="GO:0003676">
    <property type="term" value="F:nucleic acid binding"/>
    <property type="evidence" value="ECO:0007669"/>
    <property type="project" value="InterPro"/>
</dbReference>
<dbReference type="GO" id="GO:0006421">
    <property type="term" value="P:asparaginyl-tRNA aminoacylation"/>
    <property type="evidence" value="ECO:0007669"/>
    <property type="project" value="UniProtKB-UniRule"/>
</dbReference>
<dbReference type="CDD" id="cd00776">
    <property type="entry name" value="AsxRS_core"/>
    <property type="match status" value="1"/>
</dbReference>
<dbReference type="CDD" id="cd04318">
    <property type="entry name" value="EcAsnRS_like_N"/>
    <property type="match status" value="1"/>
</dbReference>
<dbReference type="FunFam" id="2.40.50.140:FF:000116">
    <property type="entry name" value="Asparagine--tRNA ligase"/>
    <property type="match status" value="1"/>
</dbReference>
<dbReference type="FunFam" id="3.30.930.10:FF:000016">
    <property type="entry name" value="Asparagine--tRNA ligase"/>
    <property type="match status" value="1"/>
</dbReference>
<dbReference type="Gene3D" id="3.30.930.10">
    <property type="entry name" value="Bira Bifunctional Protein, Domain 2"/>
    <property type="match status" value="1"/>
</dbReference>
<dbReference type="Gene3D" id="2.40.50.140">
    <property type="entry name" value="Nucleic acid-binding proteins"/>
    <property type="match status" value="1"/>
</dbReference>
<dbReference type="HAMAP" id="MF_00534">
    <property type="entry name" value="Asn_tRNA_synth"/>
    <property type="match status" value="1"/>
</dbReference>
<dbReference type="InterPro" id="IPR004364">
    <property type="entry name" value="Aa-tRNA-synt_II"/>
</dbReference>
<dbReference type="InterPro" id="IPR006195">
    <property type="entry name" value="aa-tRNA-synth_II"/>
</dbReference>
<dbReference type="InterPro" id="IPR045864">
    <property type="entry name" value="aa-tRNA-synth_II/BPL/LPL"/>
</dbReference>
<dbReference type="InterPro" id="IPR004522">
    <property type="entry name" value="Asn-tRNA-ligase"/>
</dbReference>
<dbReference type="InterPro" id="IPR002312">
    <property type="entry name" value="Asp/Asn-tRNA-synth_IIb"/>
</dbReference>
<dbReference type="InterPro" id="IPR012340">
    <property type="entry name" value="NA-bd_OB-fold"/>
</dbReference>
<dbReference type="InterPro" id="IPR004365">
    <property type="entry name" value="NA-bd_OB_tRNA"/>
</dbReference>
<dbReference type="NCBIfam" id="TIGR00457">
    <property type="entry name" value="asnS"/>
    <property type="match status" value="1"/>
</dbReference>
<dbReference type="NCBIfam" id="NF003037">
    <property type="entry name" value="PRK03932.1"/>
    <property type="match status" value="1"/>
</dbReference>
<dbReference type="PANTHER" id="PTHR22594:SF34">
    <property type="entry name" value="ASPARAGINE--TRNA LIGASE, MITOCHONDRIAL-RELATED"/>
    <property type="match status" value="1"/>
</dbReference>
<dbReference type="PANTHER" id="PTHR22594">
    <property type="entry name" value="ASPARTYL/LYSYL-TRNA SYNTHETASE"/>
    <property type="match status" value="1"/>
</dbReference>
<dbReference type="Pfam" id="PF00152">
    <property type="entry name" value="tRNA-synt_2"/>
    <property type="match status" value="1"/>
</dbReference>
<dbReference type="Pfam" id="PF01336">
    <property type="entry name" value="tRNA_anti-codon"/>
    <property type="match status" value="1"/>
</dbReference>
<dbReference type="PRINTS" id="PR01042">
    <property type="entry name" value="TRNASYNTHASP"/>
</dbReference>
<dbReference type="SUPFAM" id="SSF55681">
    <property type="entry name" value="Class II aaRS and biotin synthetases"/>
    <property type="match status" value="1"/>
</dbReference>
<dbReference type="SUPFAM" id="SSF50249">
    <property type="entry name" value="Nucleic acid-binding proteins"/>
    <property type="match status" value="1"/>
</dbReference>
<dbReference type="PROSITE" id="PS50862">
    <property type="entry name" value="AA_TRNA_LIGASE_II"/>
    <property type="match status" value="1"/>
</dbReference>
<evidence type="ECO:0000255" key="1">
    <source>
        <dbReference type="HAMAP-Rule" id="MF_00534"/>
    </source>
</evidence>
<reference key="1">
    <citation type="journal article" date="2010" name="PLoS Genet.">
        <title>Genome sequence of the plant growth promoting endophytic bacterium Enterobacter sp. 638.</title>
        <authorList>
            <person name="Taghavi S."/>
            <person name="van der Lelie D."/>
            <person name="Hoffman A."/>
            <person name="Zhang Y.B."/>
            <person name="Walla M.D."/>
            <person name="Vangronsveld J."/>
            <person name="Newman L."/>
            <person name="Monchy S."/>
        </authorList>
    </citation>
    <scope>NUCLEOTIDE SEQUENCE [LARGE SCALE GENOMIC DNA]</scope>
    <source>
        <strain>638</strain>
    </source>
</reference>
<comment type="catalytic activity">
    <reaction evidence="1">
        <text>tRNA(Asn) + L-asparagine + ATP = L-asparaginyl-tRNA(Asn) + AMP + diphosphate + H(+)</text>
        <dbReference type="Rhea" id="RHEA:11180"/>
        <dbReference type="Rhea" id="RHEA-COMP:9659"/>
        <dbReference type="Rhea" id="RHEA-COMP:9674"/>
        <dbReference type="ChEBI" id="CHEBI:15378"/>
        <dbReference type="ChEBI" id="CHEBI:30616"/>
        <dbReference type="ChEBI" id="CHEBI:33019"/>
        <dbReference type="ChEBI" id="CHEBI:58048"/>
        <dbReference type="ChEBI" id="CHEBI:78442"/>
        <dbReference type="ChEBI" id="CHEBI:78515"/>
        <dbReference type="ChEBI" id="CHEBI:456215"/>
        <dbReference type="EC" id="6.1.1.22"/>
    </reaction>
</comment>
<comment type="subunit">
    <text evidence="1">Homodimer.</text>
</comment>
<comment type="subcellular location">
    <subcellularLocation>
        <location evidence="1">Cytoplasm</location>
    </subcellularLocation>
</comment>
<comment type="similarity">
    <text evidence="1">Belongs to the class-II aminoacyl-tRNA synthetase family.</text>
</comment>